<name>RS19_FRACC</name>
<gene>
    <name evidence="1" type="primary">rpsS</name>
    <name type="ordered locus">Francci3_0586</name>
</gene>
<proteinExistence type="inferred from homology"/>
<comment type="function">
    <text evidence="1">Protein S19 forms a complex with S13 that binds strongly to the 16S ribosomal RNA.</text>
</comment>
<comment type="similarity">
    <text evidence="1">Belongs to the universal ribosomal protein uS19 family.</text>
</comment>
<feature type="chain" id="PRO_0000265364" description="Small ribosomal subunit protein uS19">
    <location>
        <begin position="1"/>
        <end position="93"/>
    </location>
</feature>
<accession>Q2JFH2</accession>
<sequence length="93" mass="10618">MPRSLKKGPFVDDHLLKKVDLQNSKGTKHVIKTWSRRSTVIPDMLGHTIAVHDGRKHVPVFITEGMVGHKLGEFAPTRTFRGHVKEDRRSRRG</sequence>
<protein>
    <recommendedName>
        <fullName evidence="1">Small ribosomal subunit protein uS19</fullName>
    </recommendedName>
    <alternativeName>
        <fullName evidence="2">30S ribosomal protein S19</fullName>
    </alternativeName>
</protein>
<reference key="1">
    <citation type="journal article" date="2007" name="Genome Res.">
        <title>Genome characteristics of facultatively symbiotic Frankia sp. strains reflect host range and host plant biogeography.</title>
        <authorList>
            <person name="Normand P."/>
            <person name="Lapierre P."/>
            <person name="Tisa L.S."/>
            <person name="Gogarten J.P."/>
            <person name="Alloisio N."/>
            <person name="Bagnarol E."/>
            <person name="Bassi C.A."/>
            <person name="Berry A.M."/>
            <person name="Bickhart D.M."/>
            <person name="Choisne N."/>
            <person name="Couloux A."/>
            <person name="Cournoyer B."/>
            <person name="Cruveiller S."/>
            <person name="Daubin V."/>
            <person name="Demange N."/>
            <person name="Francino M.P."/>
            <person name="Goltsman E."/>
            <person name="Huang Y."/>
            <person name="Kopp O.R."/>
            <person name="Labarre L."/>
            <person name="Lapidus A."/>
            <person name="Lavire C."/>
            <person name="Marechal J."/>
            <person name="Martinez M."/>
            <person name="Mastronunzio J.E."/>
            <person name="Mullin B.C."/>
            <person name="Niemann J."/>
            <person name="Pujic P."/>
            <person name="Rawnsley T."/>
            <person name="Rouy Z."/>
            <person name="Schenowitz C."/>
            <person name="Sellstedt A."/>
            <person name="Tavares F."/>
            <person name="Tomkins J.P."/>
            <person name="Vallenet D."/>
            <person name="Valverde C."/>
            <person name="Wall L.G."/>
            <person name="Wang Y."/>
            <person name="Medigue C."/>
            <person name="Benson D.R."/>
        </authorList>
    </citation>
    <scope>NUCLEOTIDE SEQUENCE [LARGE SCALE GENOMIC DNA]</scope>
    <source>
        <strain>DSM 45818 / CECT 9043 / HFP020203 / CcI3</strain>
    </source>
</reference>
<dbReference type="EMBL" id="CP000249">
    <property type="protein sequence ID" value="ABD09970.1"/>
    <property type="molecule type" value="Genomic_DNA"/>
</dbReference>
<dbReference type="RefSeq" id="WP_011435043.1">
    <property type="nucleotide sequence ID" value="NZ_LRTJ01000013.1"/>
</dbReference>
<dbReference type="SMR" id="Q2JFH2"/>
<dbReference type="STRING" id="106370.Francci3_0586"/>
<dbReference type="KEGG" id="fra:Francci3_0586"/>
<dbReference type="eggNOG" id="COG0185">
    <property type="taxonomic scope" value="Bacteria"/>
</dbReference>
<dbReference type="HOGENOM" id="CLU_144911_0_1_11"/>
<dbReference type="OrthoDB" id="9797833at2"/>
<dbReference type="PhylomeDB" id="Q2JFH2"/>
<dbReference type="Proteomes" id="UP000001937">
    <property type="component" value="Chromosome"/>
</dbReference>
<dbReference type="GO" id="GO:0005737">
    <property type="term" value="C:cytoplasm"/>
    <property type="evidence" value="ECO:0007669"/>
    <property type="project" value="UniProtKB-ARBA"/>
</dbReference>
<dbReference type="GO" id="GO:0015935">
    <property type="term" value="C:small ribosomal subunit"/>
    <property type="evidence" value="ECO:0007669"/>
    <property type="project" value="InterPro"/>
</dbReference>
<dbReference type="GO" id="GO:0019843">
    <property type="term" value="F:rRNA binding"/>
    <property type="evidence" value="ECO:0007669"/>
    <property type="project" value="UniProtKB-UniRule"/>
</dbReference>
<dbReference type="GO" id="GO:0003735">
    <property type="term" value="F:structural constituent of ribosome"/>
    <property type="evidence" value="ECO:0007669"/>
    <property type="project" value="InterPro"/>
</dbReference>
<dbReference type="GO" id="GO:0000028">
    <property type="term" value="P:ribosomal small subunit assembly"/>
    <property type="evidence" value="ECO:0007669"/>
    <property type="project" value="TreeGrafter"/>
</dbReference>
<dbReference type="GO" id="GO:0006412">
    <property type="term" value="P:translation"/>
    <property type="evidence" value="ECO:0007669"/>
    <property type="project" value="UniProtKB-UniRule"/>
</dbReference>
<dbReference type="FunFam" id="3.30.860.10:FF:000001">
    <property type="entry name" value="30S ribosomal protein S19"/>
    <property type="match status" value="1"/>
</dbReference>
<dbReference type="Gene3D" id="3.30.860.10">
    <property type="entry name" value="30s Ribosomal Protein S19, Chain A"/>
    <property type="match status" value="1"/>
</dbReference>
<dbReference type="HAMAP" id="MF_00531">
    <property type="entry name" value="Ribosomal_uS19"/>
    <property type="match status" value="1"/>
</dbReference>
<dbReference type="InterPro" id="IPR002222">
    <property type="entry name" value="Ribosomal_uS19"/>
</dbReference>
<dbReference type="InterPro" id="IPR005732">
    <property type="entry name" value="Ribosomal_uS19_bac-type"/>
</dbReference>
<dbReference type="InterPro" id="IPR020934">
    <property type="entry name" value="Ribosomal_uS19_CS"/>
</dbReference>
<dbReference type="InterPro" id="IPR023575">
    <property type="entry name" value="Ribosomal_uS19_SF"/>
</dbReference>
<dbReference type="NCBIfam" id="TIGR01050">
    <property type="entry name" value="rpsS_bact"/>
    <property type="match status" value="1"/>
</dbReference>
<dbReference type="PANTHER" id="PTHR11880">
    <property type="entry name" value="RIBOSOMAL PROTEIN S19P FAMILY MEMBER"/>
    <property type="match status" value="1"/>
</dbReference>
<dbReference type="PANTHER" id="PTHR11880:SF8">
    <property type="entry name" value="SMALL RIBOSOMAL SUBUNIT PROTEIN US19M"/>
    <property type="match status" value="1"/>
</dbReference>
<dbReference type="Pfam" id="PF00203">
    <property type="entry name" value="Ribosomal_S19"/>
    <property type="match status" value="1"/>
</dbReference>
<dbReference type="PIRSF" id="PIRSF002144">
    <property type="entry name" value="Ribosomal_S19"/>
    <property type="match status" value="1"/>
</dbReference>
<dbReference type="PRINTS" id="PR00975">
    <property type="entry name" value="RIBOSOMALS19"/>
</dbReference>
<dbReference type="SUPFAM" id="SSF54570">
    <property type="entry name" value="Ribosomal protein S19"/>
    <property type="match status" value="1"/>
</dbReference>
<dbReference type="PROSITE" id="PS00323">
    <property type="entry name" value="RIBOSOMAL_S19"/>
    <property type="match status" value="1"/>
</dbReference>
<organism>
    <name type="scientific">Frankia casuarinae (strain DSM 45818 / CECT 9043 / HFP020203 / CcI3)</name>
    <dbReference type="NCBI Taxonomy" id="106370"/>
    <lineage>
        <taxon>Bacteria</taxon>
        <taxon>Bacillati</taxon>
        <taxon>Actinomycetota</taxon>
        <taxon>Actinomycetes</taxon>
        <taxon>Frankiales</taxon>
        <taxon>Frankiaceae</taxon>
        <taxon>Frankia</taxon>
    </lineage>
</organism>
<keyword id="KW-1185">Reference proteome</keyword>
<keyword id="KW-0687">Ribonucleoprotein</keyword>
<keyword id="KW-0689">Ribosomal protein</keyword>
<keyword id="KW-0694">RNA-binding</keyword>
<keyword id="KW-0699">rRNA-binding</keyword>
<evidence type="ECO:0000255" key="1">
    <source>
        <dbReference type="HAMAP-Rule" id="MF_00531"/>
    </source>
</evidence>
<evidence type="ECO:0000305" key="2"/>